<organism>
    <name type="scientific">Bombus pensylvanicus</name>
    <name type="common">American bumblebee</name>
    <name type="synonym">Apis pensylvanica</name>
    <dbReference type="NCBI Taxonomy" id="28643"/>
    <lineage>
        <taxon>Eukaryota</taxon>
        <taxon>Metazoa</taxon>
        <taxon>Ecdysozoa</taxon>
        <taxon>Arthropoda</taxon>
        <taxon>Hexapoda</taxon>
        <taxon>Insecta</taxon>
        <taxon>Pterygota</taxon>
        <taxon>Neoptera</taxon>
        <taxon>Endopterygota</taxon>
        <taxon>Hymenoptera</taxon>
        <taxon>Apocrita</taxon>
        <taxon>Aculeata</taxon>
        <taxon>Apoidea</taxon>
        <taxon>Anthophila</taxon>
        <taxon>Apidae</taxon>
        <taxon>Bombus</taxon>
        <taxon>Fervidobombus</taxon>
    </lineage>
</organism>
<comment type="function">
    <text evidence="1 2 3">Mast cell degranulating peptide (PubMed:2578459). Its mast cell degranulation activity may be related to the activation of G-protein coupled receptors in mast cells as well as interaction with other proteins located in cell endosomal membranes in the mast cells (By similarity).</text>
</comment>
<comment type="subcellular location">
    <subcellularLocation>
        <location evidence="3">Secreted</location>
    </subcellularLocation>
</comment>
<comment type="tissue specificity">
    <text evidence="6">Expressed by the venom gland.</text>
</comment>
<comment type="similarity">
    <text evidence="5">Belongs to the MCD family. Bombolitin subfamily.</text>
</comment>
<name>BOL5_BOMPE</name>
<dbReference type="PIR" id="E22595">
    <property type="entry name" value="E22595"/>
</dbReference>
<dbReference type="GO" id="GO:0005576">
    <property type="term" value="C:extracellular region"/>
    <property type="evidence" value="ECO:0007669"/>
    <property type="project" value="UniProtKB-SubCell"/>
</dbReference>
<dbReference type="GO" id="GO:0090729">
    <property type="term" value="F:toxin activity"/>
    <property type="evidence" value="ECO:0007669"/>
    <property type="project" value="UniProtKB-KW"/>
</dbReference>
<evidence type="ECO:0000250" key="1">
    <source>
        <dbReference type="UniProtKB" id="P01514"/>
    </source>
</evidence>
<evidence type="ECO:0000250" key="2">
    <source>
        <dbReference type="UniProtKB" id="P84914"/>
    </source>
</evidence>
<evidence type="ECO:0000269" key="3">
    <source>
    </source>
</evidence>
<evidence type="ECO:0000303" key="4">
    <source>
    </source>
</evidence>
<evidence type="ECO:0000305" key="5"/>
<evidence type="ECO:0000305" key="6">
    <source>
    </source>
</evidence>
<proteinExistence type="evidence at protein level"/>
<protein>
    <recommendedName>
        <fullName evidence="5">Bombolitin-5</fullName>
    </recommendedName>
    <alternativeName>
        <fullName evidence="4">Bombolitin V</fullName>
    </alternativeName>
</protein>
<reference key="1">
    <citation type="journal article" date="1985" name="J. Biol. Chem.">
        <title>Bombolitins, a new class of mast cell degranulating peptides from the venom of the bumblebee Megabombus pennsylvanicus.</title>
        <authorList>
            <person name="Argiolas A."/>
            <person name="Pisano J.J."/>
        </authorList>
    </citation>
    <scope>PROTEIN SEQUENCE</scope>
    <scope>AMIDATION AT LEU-17</scope>
    <scope>SUBCELLULAR LOCATION</scope>
    <source>
        <tissue>Venom</tissue>
    </source>
</reference>
<sequence>INVLGILGLLGKALSHL</sequence>
<accession>P07496</accession>
<feature type="peptide" id="PRO_0000044042" description="Bombolitin-5" evidence="3">
    <location>
        <begin position="1"/>
        <end position="17"/>
    </location>
</feature>
<feature type="modified residue" description="Leucine amide" evidence="3">
    <location>
        <position position="17"/>
    </location>
</feature>
<keyword id="KW-0027">Amidation</keyword>
<keyword id="KW-0903">Direct protein sequencing</keyword>
<keyword id="KW-1213">G-protein coupled receptor impairing toxin</keyword>
<keyword id="KW-0467">Mast cell degranulation</keyword>
<keyword id="KW-0964">Secreted</keyword>
<keyword id="KW-0800">Toxin</keyword>